<protein>
    <recommendedName>
        <fullName>14-3-3 protein theta</fullName>
    </recommendedName>
</protein>
<gene>
    <name type="primary">YWHAQ</name>
    <name type="ORF">RCJMB04_2i3</name>
</gene>
<dbReference type="EMBL" id="AJ719453">
    <property type="protein sequence ID" value="CAG31112.1"/>
    <property type="molecule type" value="mRNA"/>
</dbReference>
<dbReference type="RefSeq" id="NP_001006415.1">
    <property type="nucleotide sequence ID" value="NM_001006415.2"/>
</dbReference>
<dbReference type="RefSeq" id="XP_015131523.1">
    <property type="nucleotide sequence ID" value="XM_015276037.1"/>
</dbReference>
<dbReference type="RefSeq" id="XP_040553128.1">
    <property type="nucleotide sequence ID" value="XM_040697194.2"/>
</dbReference>
<dbReference type="RefSeq" id="XP_046770118.1">
    <property type="nucleotide sequence ID" value="XM_046914162.1"/>
</dbReference>
<dbReference type="PDB" id="2YEZ">
    <property type="method" value="X-ray"/>
    <property type="resolution" value="2.90 A"/>
    <property type="chains" value="C=110-119"/>
</dbReference>
<dbReference type="PDBsum" id="2YEZ"/>
<dbReference type="SMR" id="Q5ZMD1"/>
<dbReference type="BioGRID" id="682688">
    <property type="interactions" value="2"/>
</dbReference>
<dbReference type="FunCoup" id="Q5ZMD1">
    <property type="interactions" value="2398"/>
</dbReference>
<dbReference type="IntAct" id="Q5ZMD1">
    <property type="interactions" value="1"/>
</dbReference>
<dbReference type="STRING" id="9031.ENSGALP00000052649"/>
<dbReference type="PaxDb" id="9031-ENSGALP00000036122"/>
<dbReference type="GeneID" id="421932"/>
<dbReference type="KEGG" id="gga:421932"/>
<dbReference type="CTD" id="10971"/>
<dbReference type="VEuPathDB" id="HostDB:geneid_421932"/>
<dbReference type="eggNOG" id="KOG0841">
    <property type="taxonomic scope" value="Eukaryota"/>
</dbReference>
<dbReference type="HOGENOM" id="CLU_058290_1_0_1"/>
<dbReference type="InParanoid" id="Q5ZMD1"/>
<dbReference type="OMA" id="CFLMYYL"/>
<dbReference type="OrthoDB" id="10260625at2759"/>
<dbReference type="PhylomeDB" id="Q5ZMD1"/>
<dbReference type="TreeFam" id="TF102002"/>
<dbReference type="Reactome" id="R-GGA-5628897">
    <property type="pathway name" value="TP53 Regulates Metabolic Genes"/>
</dbReference>
<dbReference type="Reactome" id="R-GGA-9614399">
    <property type="pathway name" value="Regulation of localization of FOXO transcription factors"/>
</dbReference>
<dbReference type="EvolutionaryTrace" id="Q5ZMD1"/>
<dbReference type="PRO" id="PR:Q5ZMD1"/>
<dbReference type="Proteomes" id="UP000000539">
    <property type="component" value="Chromosome 3"/>
</dbReference>
<dbReference type="Bgee" id="ENSGALG00000016433">
    <property type="expression patterns" value="Expressed in cerebellum and 12 other cell types or tissues"/>
</dbReference>
<dbReference type="GO" id="GO:0005737">
    <property type="term" value="C:cytoplasm"/>
    <property type="evidence" value="ECO:0000318"/>
    <property type="project" value="GO_Central"/>
</dbReference>
<dbReference type="GO" id="GO:0008104">
    <property type="term" value="P:protein localization"/>
    <property type="evidence" value="ECO:0000318"/>
    <property type="project" value="GO_Central"/>
</dbReference>
<dbReference type="GO" id="GO:0007165">
    <property type="term" value="P:signal transduction"/>
    <property type="evidence" value="ECO:0000318"/>
    <property type="project" value="GO_Central"/>
</dbReference>
<dbReference type="CDD" id="cd10023">
    <property type="entry name" value="14-3-3_theta"/>
    <property type="match status" value="1"/>
</dbReference>
<dbReference type="FunFam" id="1.20.190.20:FF:000001">
    <property type="entry name" value="14-3-3 gamma 1"/>
    <property type="match status" value="1"/>
</dbReference>
<dbReference type="Gene3D" id="1.20.190.20">
    <property type="entry name" value="14-3-3 domain"/>
    <property type="match status" value="1"/>
</dbReference>
<dbReference type="InterPro" id="IPR000308">
    <property type="entry name" value="14-3-3"/>
</dbReference>
<dbReference type="InterPro" id="IPR023409">
    <property type="entry name" value="14-3-3_CS"/>
</dbReference>
<dbReference type="InterPro" id="IPR036815">
    <property type="entry name" value="14-3-3_dom_sf"/>
</dbReference>
<dbReference type="InterPro" id="IPR023410">
    <property type="entry name" value="14-3-3_domain"/>
</dbReference>
<dbReference type="InterPro" id="IPR042584">
    <property type="entry name" value="14-3-3_theta"/>
</dbReference>
<dbReference type="PANTHER" id="PTHR18860">
    <property type="entry name" value="14-3-3 PROTEIN"/>
    <property type="match status" value="1"/>
</dbReference>
<dbReference type="Pfam" id="PF00244">
    <property type="entry name" value="14-3-3"/>
    <property type="match status" value="1"/>
</dbReference>
<dbReference type="PIRSF" id="PIRSF000868">
    <property type="entry name" value="14-3-3"/>
    <property type="match status" value="1"/>
</dbReference>
<dbReference type="PRINTS" id="PR00305">
    <property type="entry name" value="1433ZETA"/>
</dbReference>
<dbReference type="SMART" id="SM00101">
    <property type="entry name" value="14_3_3"/>
    <property type="match status" value="1"/>
</dbReference>
<dbReference type="SUPFAM" id="SSF48445">
    <property type="entry name" value="14-3-3 protein"/>
    <property type="match status" value="1"/>
</dbReference>
<dbReference type="PROSITE" id="PS00796">
    <property type="entry name" value="1433_1"/>
    <property type="match status" value="1"/>
</dbReference>
<dbReference type="PROSITE" id="PS00797">
    <property type="entry name" value="1433_2"/>
    <property type="match status" value="1"/>
</dbReference>
<comment type="function">
    <text evidence="1">Adapter protein implicated in the regulation of a large spectrum of both general and specialized signaling pathways. Binds to a large number of partners, usually by recognition of a phosphoserine or phosphothreonine motif. Binding generally results in the modulation of the activity of the binding partner (By similarity).</text>
</comment>
<comment type="subunit">
    <text evidence="1">Homodimer, and heterodimer with other family members.</text>
</comment>
<comment type="subcellular location">
    <subcellularLocation>
        <location evidence="1">Cytoplasm</location>
    </subcellularLocation>
</comment>
<comment type="similarity">
    <text evidence="2">Belongs to the 14-3-3 family.</text>
</comment>
<organism>
    <name type="scientific">Gallus gallus</name>
    <name type="common">Chicken</name>
    <dbReference type="NCBI Taxonomy" id="9031"/>
    <lineage>
        <taxon>Eukaryota</taxon>
        <taxon>Metazoa</taxon>
        <taxon>Chordata</taxon>
        <taxon>Craniata</taxon>
        <taxon>Vertebrata</taxon>
        <taxon>Euteleostomi</taxon>
        <taxon>Archelosauria</taxon>
        <taxon>Archosauria</taxon>
        <taxon>Dinosauria</taxon>
        <taxon>Saurischia</taxon>
        <taxon>Theropoda</taxon>
        <taxon>Coelurosauria</taxon>
        <taxon>Aves</taxon>
        <taxon>Neognathae</taxon>
        <taxon>Galloanserae</taxon>
        <taxon>Galliformes</taxon>
        <taxon>Phasianidae</taxon>
        <taxon>Phasianinae</taxon>
        <taxon>Gallus</taxon>
    </lineage>
</organism>
<feature type="chain" id="PRO_0000058641" description="14-3-3 protein theta">
    <location>
        <begin position="1"/>
        <end position="245"/>
    </location>
</feature>
<feature type="site" description="Interaction with phosphoserine on interacting protein" evidence="1">
    <location>
        <position position="56"/>
    </location>
</feature>
<feature type="site" description="Interaction with phosphoserine on interacting protein" evidence="1">
    <location>
        <position position="127"/>
    </location>
</feature>
<feature type="helix" evidence="3">
    <location>
        <begin position="114"/>
        <end position="117"/>
    </location>
</feature>
<name>1433T_CHICK</name>
<sequence length="245" mass="27782">MDKTELIQKAKLAEQAERYDDMATCMKAVTEQGAELSNEERNLLSVAYKNVVGGRRSAWRVISSIEQKTDTSDKKMQLIKDYREKVESELRSICTTVLELLDKYLIANATNPESKVFYLKMKGDYFRYLAEVACGDDRKQTIENSQGAYQEAFDISKKEMQPTHPIRLGLALNFSVFYYEILNNPELACTLAKTAFDEAIAELDTLNEDSYKDSTLIMQLLRDNLTLWTSDSAGEECDAAEGAEN</sequence>
<reference key="1">
    <citation type="journal article" date="2005" name="Genome Biol.">
        <title>Full-length cDNAs from chicken bursal lymphocytes to facilitate gene function analysis.</title>
        <authorList>
            <person name="Caldwell R.B."/>
            <person name="Kierzek A.M."/>
            <person name="Arakawa H."/>
            <person name="Bezzubov Y."/>
            <person name="Zaim J."/>
            <person name="Fiedler P."/>
            <person name="Kutter S."/>
            <person name="Blagodatski A."/>
            <person name="Kostovska D."/>
            <person name="Koter M."/>
            <person name="Plachy J."/>
            <person name="Carninci P."/>
            <person name="Hayashizaki Y."/>
            <person name="Buerstedde J.-M."/>
        </authorList>
    </citation>
    <scope>NUCLEOTIDE SEQUENCE [LARGE SCALE MRNA]</scope>
    <source>
        <strain>CB</strain>
        <tissue>Bursa of Fabricius</tissue>
    </source>
</reference>
<keyword id="KW-0002">3D-structure</keyword>
<keyword id="KW-0963">Cytoplasm</keyword>
<keyword id="KW-1185">Reference proteome</keyword>
<accession>Q5ZMD1</accession>
<proteinExistence type="evidence at protein level"/>
<evidence type="ECO:0000250" key="1"/>
<evidence type="ECO:0000305" key="2"/>
<evidence type="ECO:0007829" key="3">
    <source>
        <dbReference type="PDB" id="2YEZ"/>
    </source>
</evidence>